<organism>
    <name type="scientific">Arabidopsis thaliana</name>
    <name type="common">Mouse-ear cress</name>
    <dbReference type="NCBI Taxonomy" id="3702"/>
    <lineage>
        <taxon>Eukaryota</taxon>
        <taxon>Viridiplantae</taxon>
        <taxon>Streptophyta</taxon>
        <taxon>Embryophyta</taxon>
        <taxon>Tracheophyta</taxon>
        <taxon>Spermatophyta</taxon>
        <taxon>Magnoliopsida</taxon>
        <taxon>eudicotyledons</taxon>
        <taxon>Gunneridae</taxon>
        <taxon>Pentapetalae</taxon>
        <taxon>rosids</taxon>
        <taxon>malvids</taxon>
        <taxon>Brassicales</taxon>
        <taxon>Brassicaceae</taxon>
        <taxon>Camelineae</taxon>
        <taxon>Arabidopsis</taxon>
    </lineage>
</organism>
<keyword id="KW-1003">Cell membrane</keyword>
<keyword id="KW-0967">Endosome</keyword>
<keyword id="KW-0406">Ion transport</keyword>
<keyword id="KW-0460">Magnesium</keyword>
<keyword id="KW-0472">Membrane</keyword>
<keyword id="KW-1185">Reference proteome</keyword>
<keyword id="KW-0812">Transmembrane</keyword>
<keyword id="KW-1133">Transmembrane helix</keyword>
<keyword id="KW-0813">Transport</keyword>
<gene>
    <name type="ordered locus">At1g71900</name>
    <name type="ORF">F17M19.5</name>
</gene>
<proteinExistence type="evidence at transcript level"/>
<sequence>MAESSGSWRDSYKGMSSDNIKGLVLALSSSLFIGASFIVKKKGLKKAASTGTRAGVGGYSYLYEPLWWIGMTTMLLGEIANFAAYAFAPAILVTPLGAVSIIISAVLAHIILREKLHIFGILGCALCVVGSTTIVLHAPQEREIDSVIEVWNLATEPAFMFYASLVIGAAVFLIIRFVPQYGQTNVMVYIGICSLVGSLSVMSVKALGIALKLTFSGTNQLFYPQTWIFTLVVLTCVVTQLNYLNKALDTFNTAIVSPIYYVMFTSLTILASVIMFKDWDRQNGTQIVTEICGFVTILSGTFLLHRTKDMVEGSSVILPLRISKHINEEEGIPLRRQESLRSP</sequence>
<accession>Q94AH3</accession>
<accession>Q9C8X1</accession>
<comment type="function">
    <text evidence="1">Acts as a Mg(2+) transporter. Can also transport other divalent cations such as Fe(2+), Sr(2+), Ba(2+), Mn(2+) and Co(2+) but to a much less extent than Mg(2+) (By similarity).</text>
</comment>
<comment type="subunit">
    <text evidence="1">Homodimer.</text>
</comment>
<comment type="subcellular location">
    <subcellularLocation>
        <location evidence="1">Cell membrane</location>
        <topology evidence="1">Multi-pass membrane protein</topology>
    </subcellularLocation>
    <subcellularLocation>
        <location evidence="1">Early endosome</location>
    </subcellularLocation>
    <text evidence="1">Recruited to the cell membrane in response to low extracellular magnesium.</text>
</comment>
<comment type="similarity">
    <text evidence="3">Belongs to the NIPA (TC 2.A.7) family.</text>
</comment>
<comment type="sequence caution" evidence="3">
    <conflict type="erroneous gene model prediction">
        <sequence resource="EMBL-CDS" id="AAG52228"/>
    </conflict>
</comment>
<feature type="chain" id="PRO_0000430292" description="Probable magnesium transporter NIPA4">
    <location>
        <begin position="1"/>
        <end position="343"/>
    </location>
</feature>
<feature type="topological domain" description="Extracellular" evidence="2">
    <location>
        <begin position="1"/>
        <end position="18"/>
    </location>
</feature>
<feature type="transmembrane region" description="Helical; Name=1" evidence="2">
    <location>
        <begin position="19"/>
        <end position="39"/>
    </location>
</feature>
<feature type="topological domain" description="Cytoplasmic" evidence="2">
    <location>
        <begin position="40"/>
        <end position="66"/>
    </location>
</feature>
<feature type="transmembrane region" description="Helical; Name=2" evidence="2">
    <location>
        <begin position="67"/>
        <end position="87"/>
    </location>
</feature>
<feature type="topological domain" description="Extracellular" evidence="2">
    <location>
        <begin position="88"/>
        <end position="90"/>
    </location>
</feature>
<feature type="transmembrane region" description="Helical; Name=3" evidence="2">
    <location>
        <begin position="91"/>
        <end position="111"/>
    </location>
</feature>
<feature type="topological domain" description="Cytoplasmic" evidence="2">
    <location>
        <begin position="112"/>
        <end position="115"/>
    </location>
</feature>
<feature type="transmembrane region" description="Helical; Name=4" evidence="2">
    <location>
        <begin position="116"/>
        <end position="136"/>
    </location>
</feature>
<feature type="topological domain" description="Extracellular" evidence="2">
    <location>
        <begin position="137"/>
        <end position="157"/>
    </location>
</feature>
<feature type="transmembrane region" description="Helical; Name=5" evidence="2">
    <location>
        <begin position="158"/>
        <end position="178"/>
    </location>
</feature>
<feature type="topological domain" description="Cytoplasmic" evidence="2">
    <location>
        <begin position="179"/>
        <end position="189"/>
    </location>
</feature>
<feature type="transmembrane region" description="Helical; Name=6" evidence="2">
    <location>
        <begin position="190"/>
        <end position="210"/>
    </location>
</feature>
<feature type="topological domain" description="Extracellular" evidence="2">
    <location>
        <begin position="211"/>
        <end position="220"/>
    </location>
</feature>
<feature type="transmembrane region" description="Helical; Name=7" evidence="2">
    <location>
        <begin position="221"/>
        <end position="241"/>
    </location>
</feature>
<feature type="topological domain" description="Cytoplasmic" evidence="2">
    <location>
        <begin position="242"/>
        <end position="254"/>
    </location>
</feature>
<feature type="transmembrane region" description="Helical; Name=8" evidence="2">
    <location>
        <begin position="255"/>
        <end position="275"/>
    </location>
</feature>
<feature type="topological domain" description="Extracellular" evidence="2">
    <location>
        <begin position="276"/>
        <end position="283"/>
    </location>
</feature>
<feature type="transmembrane region" description="Helical; Name=9" evidence="2">
    <location>
        <begin position="284"/>
        <end position="304"/>
    </location>
</feature>
<feature type="topological domain" description="Cytoplasmic" evidence="2">
    <location>
        <begin position="305"/>
        <end position="343"/>
    </location>
</feature>
<evidence type="ECO:0000250" key="1"/>
<evidence type="ECO:0000255" key="2"/>
<evidence type="ECO:0000305" key="3"/>
<name>NIPA4_ARATH</name>
<reference key="1">
    <citation type="journal article" date="2000" name="Nature">
        <title>Sequence and analysis of chromosome 1 of the plant Arabidopsis thaliana.</title>
        <authorList>
            <person name="Theologis A."/>
            <person name="Ecker J.R."/>
            <person name="Palm C.J."/>
            <person name="Federspiel N.A."/>
            <person name="Kaul S."/>
            <person name="White O."/>
            <person name="Alonso J."/>
            <person name="Altafi H."/>
            <person name="Araujo R."/>
            <person name="Bowman C.L."/>
            <person name="Brooks S.Y."/>
            <person name="Buehler E."/>
            <person name="Chan A."/>
            <person name="Chao Q."/>
            <person name="Chen H."/>
            <person name="Cheuk R.F."/>
            <person name="Chin C.W."/>
            <person name="Chung M.K."/>
            <person name="Conn L."/>
            <person name="Conway A.B."/>
            <person name="Conway A.R."/>
            <person name="Creasy T.H."/>
            <person name="Dewar K."/>
            <person name="Dunn P."/>
            <person name="Etgu P."/>
            <person name="Feldblyum T.V."/>
            <person name="Feng J.-D."/>
            <person name="Fong B."/>
            <person name="Fujii C.Y."/>
            <person name="Gill J.E."/>
            <person name="Goldsmith A.D."/>
            <person name="Haas B."/>
            <person name="Hansen N.F."/>
            <person name="Hughes B."/>
            <person name="Huizar L."/>
            <person name="Hunter J.L."/>
            <person name="Jenkins J."/>
            <person name="Johnson-Hopson C."/>
            <person name="Khan S."/>
            <person name="Khaykin E."/>
            <person name="Kim C.J."/>
            <person name="Koo H.L."/>
            <person name="Kremenetskaia I."/>
            <person name="Kurtz D.B."/>
            <person name="Kwan A."/>
            <person name="Lam B."/>
            <person name="Langin-Hooper S."/>
            <person name="Lee A."/>
            <person name="Lee J.M."/>
            <person name="Lenz C.A."/>
            <person name="Li J.H."/>
            <person name="Li Y.-P."/>
            <person name="Lin X."/>
            <person name="Liu S.X."/>
            <person name="Liu Z.A."/>
            <person name="Luros J.S."/>
            <person name="Maiti R."/>
            <person name="Marziali A."/>
            <person name="Militscher J."/>
            <person name="Miranda M."/>
            <person name="Nguyen M."/>
            <person name="Nierman W.C."/>
            <person name="Osborne B.I."/>
            <person name="Pai G."/>
            <person name="Peterson J."/>
            <person name="Pham P.K."/>
            <person name="Rizzo M."/>
            <person name="Rooney T."/>
            <person name="Rowley D."/>
            <person name="Sakano H."/>
            <person name="Salzberg S.L."/>
            <person name="Schwartz J.R."/>
            <person name="Shinn P."/>
            <person name="Southwick A.M."/>
            <person name="Sun H."/>
            <person name="Tallon L.J."/>
            <person name="Tambunga G."/>
            <person name="Toriumi M.J."/>
            <person name="Town C.D."/>
            <person name="Utterback T."/>
            <person name="Van Aken S."/>
            <person name="Vaysberg M."/>
            <person name="Vysotskaia V.S."/>
            <person name="Walker M."/>
            <person name="Wu D."/>
            <person name="Yu G."/>
            <person name="Fraser C.M."/>
            <person name="Venter J.C."/>
            <person name="Davis R.W."/>
        </authorList>
    </citation>
    <scope>NUCLEOTIDE SEQUENCE [LARGE SCALE GENOMIC DNA]</scope>
    <source>
        <strain>cv. Columbia</strain>
    </source>
</reference>
<reference key="2">
    <citation type="journal article" date="2017" name="Plant J.">
        <title>Araport11: a complete reannotation of the Arabidopsis thaliana reference genome.</title>
        <authorList>
            <person name="Cheng C.Y."/>
            <person name="Krishnakumar V."/>
            <person name="Chan A.P."/>
            <person name="Thibaud-Nissen F."/>
            <person name="Schobel S."/>
            <person name="Town C.D."/>
        </authorList>
    </citation>
    <scope>GENOME REANNOTATION</scope>
    <source>
        <strain>cv. Columbia</strain>
    </source>
</reference>
<reference key="3">
    <citation type="journal article" date="2003" name="Science">
        <title>Empirical analysis of transcriptional activity in the Arabidopsis genome.</title>
        <authorList>
            <person name="Yamada K."/>
            <person name="Lim J."/>
            <person name="Dale J.M."/>
            <person name="Chen H."/>
            <person name="Shinn P."/>
            <person name="Palm C.J."/>
            <person name="Southwick A.M."/>
            <person name="Wu H.C."/>
            <person name="Kim C.J."/>
            <person name="Nguyen M."/>
            <person name="Pham P.K."/>
            <person name="Cheuk R.F."/>
            <person name="Karlin-Newmann G."/>
            <person name="Liu S.X."/>
            <person name="Lam B."/>
            <person name="Sakano H."/>
            <person name="Wu T."/>
            <person name="Yu G."/>
            <person name="Miranda M."/>
            <person name="Quach H.L."/>
            <person name="Tripp M."/>
            <person name="Chang C.H."/>
            <person name="Lee J.M."/>
            <person name="Toriumi M.J."/>
            <person name="Chan M.M."/>
            <person name="Tang C.C."/>
            <person name="Onodera C.S."/>
            <person name="Deng J.M."/>
            <person name="Akiyama K."/>
            <person name="Ansari Y."/>
            <person name="Arakawa T."/>
            <person name="Banh J."/>
            <person name="Banno F."/>
            <person name="Bowser L."/>
            <person name="Brooks S.Y."/>
            <person name="Carninci P."/>
            <person name="Chao Q."/>
            <person name="Choy N."/>
            <person name="Enju A."/>
            <person name="Goldsmith A.D."/>
            <person name="Gurjal M."/>
            <person name="Hansen N.F."/>
            <person name="Hayashizaki Y."/>
            <person name="Johnson-Hopson C."/>
            <person name="Hsuan V.W."/>
            <person name="Iida K."/>
            <person name="Karnes M."/>
            <person name="Khan S."/>
            <person name="Koesema E."/>
            <person name="Ishida J."/>
            <person name="Jiang P.X."/>
            <person name="Jones T."/>
            <person name="Kawai J."/>
            <person name="Kamiya A."/>
            <person name="Meyers C."/>
            <person name="Nakajima M."/>
            <person name="Narusaka M."/>
            <person name="Seki M."/>
            <person name="Sakurai T."/>
            <person name="Satou M."/>
            <person name="Tamse R."/>
            <person name="Vaysberg M."/>
            <person name="Wallender E.K."/>
            <person name="Wong C."/>
            <person name="Yamamura Y."/>
            <person name="Yuan S."/>
            <person name="Shinozaki K."/>
            <person name="Davis R.W."/>
            <person name="Theologis A."/>
            <person name="Ecker J.R."/>
        </authorList>
    </citation>
    <scope>NUCLEOTIDE SEQUENCE [LARGE SCALE MRNA]</scope>
    <source>
        <strain>cv. Columbia</strain>
    </source>
</reference>
<protein>
    <recommendedName>
        <fullName>Probable magnesium transporter NIPA4</fullName>
    </recommendedName>
</protein>
<dbReference type="EMBL" id="AC021665">
    <property type="protein sequence ID" value="AAG52228.1"/>
    <property type="status" value="ALT_SEQ"/>
    <property type="molecule type" value="Genomic_DNA"/>
</dbReference>
<dbReference type="EMBL" id="CP002684">
    <property type="protein sequence ID" value="AEE35249.1"/>
    <property type="molecule type" value="Genomic_DNA"/>
</dbReference>
<dbReference type="EMBL" id="AY046035">
    <property type="protein sequence ID" value="AAK76709.1"/>
    <property type="molecule type" value="mRNA"/>
</dbReference>
<dbReference type="EMBL" id="AY079390">
    <property type="protein sequence ID" value="AAL85121.1"/>
    <property type="molecule type" value="mRNA"/>
</dbReference>
<dbReference type="PIR" id="G96741">
    <property type="entry name" value="G96741"/>
</dbReference>
<dbReference type="RefSeq" id="NP_001321559.1">
    <property type="nucleotide sequence ID" value="NM_001334507.1"/>
</dbReference>
<dbReference type="RefSeq" id="NP_565027.1">
    <property type="nucleotide sequence ID" value="NM_105848.5"/>
</dbReference>
<dbReference type="BioGRID" id="28741">
    <property type="interactions" value="9"/>
</dbReference>
<dbReference type="FunCoup" id="Q94AH3">
    <property type="interactions" value="4434"/>
</dbReference>
<dbReference type="IntAct" id="Q94AH3">
    <property type="interactions" value="9"/>
</dbReference>
<dbReference type="STRING" id="3702.Q94AH3"/>
<dbReference type="iPTMnet" id="Q94AH3"/>
<dbReference type="PaxDb" id="3702-AT1G71900.1"/>
<dbReference type="ProteomicsDB" id="249440"/>
<dbReference type="EnsemblPlants" id="AT1G71900.1">
    <property type="protein sequence ID" value="AT1G71900.1"/>
    <property type="gene ID" value="AT1G71900"/>
</dbReference>
<dbReference type="GeneID" id="843521"/>
<dbReference type="Gramene" id="AT1G71900.1">
    <property type="protein sequence ID" value="AT1G71900.1"/>
    <property type="gene ID" value="AT1G71900"/>
</dbReference>
<dbReference type="KEGG" id="ath:AT1G71900"/>
<dbReference type="Araport" id="AT1G71900"/>
<dbReference type="TAIR" id="AT1G71900">
    <property type="gene designation" value="ENOR3L4"/>
</dbReference>
<dbReference type="eggNOG" id="KOG2922">
    <property type="taxonomic scope" value="Eukaryota"/>
</dbReference>
<dbReference type="HOGENOM" id="CLU_012349_1_1_1"/>
<dbReference type="InParanoid" id="Q94AH3"/>
<dbReference type="OMA" id="PQYGETN"/>
<dbReference type="OrthoDB" id="6428174at2759"/>
<dbReference type="PhylomeDB" id="Q94AH3"/>
<dbReference type="PRO" id="PR:Q94AH3"/>
<dbReference type="Proteomes" id="UP000006548">
    <property type="component" value="Chromosome 1"/>
</dbReference>
<dbReference type="ExpressionAtlas" id="Q94AH3">
    <property type="expression patterns" value="baseline and differential"/>
</dbReference>
<dbReference type="GO" id="GO:0005769">
    <property type="term" value="C:early endosome"/>
    <property type="evidence" value="ECO:0000250"/>
    <property type="project" value="UniProtKB"/>
</dbReference>
<dbReference type="GO" id="GO:0005886">
    <property type="term" value="C:plasma membrane"/>
    <property type="evidence" value="ECO:0000250"/>
    <property type="project" value="UniProtKB"/>
</dbReference>
<dbReference type="GO" id="GO:0015095">
    <property type="term" value="F:magnesium ion transmembrane transporter activity"/>
    <property type="evidence" value="ECO:0007669"/>
    <property type="project" value="InterPro"/>
</dbReference>
<dbReference type="GO" id="GO:0015693">
    <property type="term" value="P:magnesium ion transport"/>
    <property type="evidence" value="ECO:0000250"/>
    <property type="project" value="UniProtKB"/>
</dbReference>
<dbReference type="InterPro" id="IPR008521">
    <property type="entry name" value="Mg_trans_NIPA"/>
</dbReference>
<dbReference type="PANTHER" id="PTHR12570">
    <property type="match status" value="1"/>
</dbReference>
<dbReference type="PANTHER" id="PTHR12570:SF84">
    <property type="entry name" value="MAGNESIUM TRANSPORTER NIPA4-RELATED"/>
    <property type="match status" value="1"/>
</dbReference>
<dbReference type="Pfam" id="PF05653">
    <property type="entry name" value="Mg_trans_NIPA"/>
    <property type="match status" value="1"/>
</dbReference>
<dbReference type="SUPFAM" id="SSF103481">
    <property type="entry name" value="Multidrug resistance efflux transporter EmrE"/>
    <property type="match status" value="1"/>
</dbReference>